<reference key="1">
    <citation type="journal article" date="2006" name="J. Bacteriol.">
        <title>The Methanosarcina barkeri genome: comparative analysis with Methanosarcina acetivorans and Methanosarcina mazei reveals extensive rearrangement within methanosarcinal genomes.</title>
        <authorList>
            <person name="Maeder D.L."/>
            <person name="Anderson I."/>
            <person name="Brettin T.S."/>
            <person name="Bruce D.C."/>
            <person name="Gilna P."/>
            <person name="Han C.S."/>
            <person name="Lapidus A."/>
            <person name="Metcalf W.W."/>
            <person name="Saunders E."/>
            <person name="Tapia R."/>
            <person name="Sowers K.R."/>
        </authorList>
    </citation>
    <scope>NUCLEOTIDE SEQUENCE [LARGE SCALE GENOMIC DNA]</scope>
    <source>
        <strain>Fusaro / DSM 804</strain>
    </source>
</reference>
<dbReference type="EMBL" id="CP000099">
    <property type="protein sequence ID" value="AAZ69439.1"/>
    <property type="molecule type" value="Genomic_DNA"/>
</dbReference>
<dbReference type="SMR" id="Q46FA3"/>
<dbReference type="STRING" id="269797.Mbar_A0457"/>
<dbReference type="PaxDb" id="269797-Mbar_A0457"/>
<dbReference type="KEGG" id="mba:Mbar_A0457"/>
<dbReference type="eggNOG" id="arCOG04177">
    <property type="taxonomic scope" value="Archaea"/>
</dbReference>
<dbReference type="HOGENOM" id="CLU_181948_4_0_2"/>
<dbReference type="OrthoDB" id="65887at2157"/>
<dbReference type="GO" id="GO:1990904">
    <property type="term" value="C:ribonucleoprotein complex"/>
    <property type="evidence" value="ECO:0007669"/>
    <property type="project" value="UniProtKB-KW"/>
</dbReference>
<dbReference type="GO" id="GO:0005840">
    <property type="term" value="C:ribosome"/>
    <property type="evidence" value="ECO:0007669"/>
    <property type="project" value="UniProtKB-KW"/>
</dbReference>
<dbReference type="GO" id="GO:0003735">
    <property type="term" value="F:structural constituent of ribosome"/>
    <property type="evidence" value="ECO:0007669"/>
    <property type="project" value="InterPro"/>
</dbReference>
<dbReference type="GO" id="GO:0006412">
    <property type="term" value="P:translation"/>
    <property type="evidence" value="ECO:0007669"/>
    <property type="project" value="UniProtKB-UniRule"/>
</dbReference>
<dbReference type="FunFam" id="1.10.1620.10:FF:000001">
    <property type="entry name" value="60S ribosomal protein-like L39"/>
    <property type="match status" value="1"/>
</dbReference>
<dbReference type="Gene3D" id="1.10.1620.10">
    <property type="entry name" value="Ribosomal protein L39e"/>
    <property type="match status" value="1"/>
</dbReference>
<dbReference type="HAMAP" id="MF_00629">
    <property type="entry name" value="Ribosomal_eL39"/>
    <property type="match status" value="1"/>
</dbReference>
<dbReference type="InterPro" id="IPR000077">
    <property type="entry name" value="Ribosomal_eL39"/>
</dbReference>
<dbReference type="InterPro" id="IPR020083">
    <property type="entry name" value="Ribosomal_eL39_CS"/>
</dbReference>
<dbReference type="InterPro" id="IPR023626">
    <property type="entry name" value="Ribosomal_eL39_dom_sf"/>
</dbReference>
<dbReference type="NCBIfam" id="NF002316">
    <property type="entry name" value="PRK01242.1"/>
    <property type="match status" value="1"/>
</dbReference>
<dbReference type="Pfam" id="PF00832">
    <property type="entry name" value="Ribosomal_L39"/>
    <property type="match status" value="1"/>
</dbReference>
<dbReference type="SUPFAM" id="SSF48662">
    <property type="entry name" value="Ribosomal protein L39e"/>
    <property type="match status" value="1"/>
</dbReference>
<dbReference type="PROSITE" id="PS00051">
    <property type="entry name" value="RIBOSOMAL_L39E"/>
    <property type="match status" value="1"/>
</dbReference>
<comment type="similarity">
    <text evidence="1">Belongs to the eukaryotic ribosomal protein eL39 family.</text>
</comment>
<evidence type="ECO:0000255" key="1">
    <source>
        <dbReference type="HAMAP-Rule" id="MF_00629"/>
    </source>
</evidence>
<evidence type="ECO:0000305" key="2"/>
<feature type="chain" id="PRO_1000051685" description="Large ribosomal subunit protein eL39">
    <location>
        <begin position="1"/>
        <end position="51"/>
    </location>
</feature>
<sequence>MSHNMKGQKIRLAKAHKQNTRVPVWVIVKTNRKVVSHPRRRHWRRRSLDVK</sequence>
<keyword id="KW-0687">Ribonucleoprotein</keyword>
<keyword id="KW-0689">Ribosomal protein</keyword>
<gene>
    <name evidence="1" type="primary">rpl39e</name>
    <name type="ordered locus">Mbar_A0457</name>
</gene>
<accession>Q46FA3</accession>
<proteinExistence type="inferred from homology"/>
<protein>
    <recommendedName>
        <fullName evidence="1">Large ribosomal subunit protein eL39</fullName>
    </recommendedName>
    <alternativeName>
        <fullName evidence="2">50S ribosomal protein L39e</fullName>
    </alternativeName>
</protein>
<organism>
    <name type="scientific">Methanosarcina barkeri (strain Fusaro / DSM 804)</name>
    <dbReference type="NCBI Taxonomy" id="269797"/>
    <lineage>
        <taxon>Archaea</taxon>
        <taxon>Methanobacteriati</taxon>
        <taxon>Methanobacteriota</taxon>
        <taxon>Stenosarchaea group</taxon>
        <taxon>Methanomicrobia</taxon>
        <taxon>Methanosarcinales</taxon>
        <taxon>Methanosarcinaceae</taxon>
        <taxon>Methanosarcina</taxon>
    </lineage>
</organism>
<name>RL39_METBF</name>